<organism>
    <name type="scientific">Arabidopsis thaliana</name>
    <name type="common">Mouse-ear cress</name>
    <dbReference type="NCBI Taxonomy" id="3702"/>
    <lineage>
        <taxon>Eukaryota</taxon>
        <taxon>Viridiplantae</taxon>
        <taxon>Streptophyta</taxon>
        <taxon>Embryophyta</taxon>
        <taxon>Tracheophyta</taxon>
        <taxon>Spermatophyta</taxon>
        <taxon>Magnoliopsida</taxon>
        <taxon>eudicotyledons</taxon>
        <taxon>Gunneridae</taxon>
        <taxon>Pentapetalae</taxon>
        <taxon>rosids</taxon>
        <taxon>malvids</taxon>
        <taxon>Brassicales</taxon>
        <taxon>Brassicaceae</taxon>
        <taxon>Camelineae</taxon>
        <taxon>Arabidopsis</taxon>
    </lineage>
</organism>
<proteinExistence type="evidence at protein level"/>
<keyword id="KW-0150">Chloroplast</keyword>
<keyword id="KW-0597">Phosphoprotein</keyword>
<keyword id="KW-0934">Plastid</keyword>
<keyword id="KW-1185">Reference proteome</keyword>
<keyword id="KW-0809">Transit peptide</keyword>
<comment type="function">
    <text evidence="7">Required for plastoglobule development and resistance to multiple stresses. Regulates plastoglobule osmiophilic content. May be involved in the transport of lipophilic antioxidants in and out of the plastoglobule.</text>
</comment>
<comment type="subunit">
    <text evidence="6">Part of the Photosystem II light-harvesting complex (LHCII).</text>
</comment>
<comment type="subcellular location">
    <subcellularLocation>
        <location evidence="3 4 8">Plastid</location>
        <location evidence="3 4 8">Chloroplast</location>
        <location evidence="3 4 8">Plastoglobule</location>
    </subcellularLocation>
</comment>
<comment type="PTM">
    <text evidence="5">Phosphorylated as part of a basal defense response.</text>
</comment>
<comment type="disruption phenotype">
    <text evidence="7">Increased susceptibility to ozone and to bacterial disease.</text>
</comment>
<comment type="similarity">
    <text evidence="15">Belongs to the PAP/fibrillin family.</text>
</comment>
<feature type="transit peptide" description="Chloroplast" evidence="1">
    <location>
        <begin position="1"/>
        <end position="72"/>
    </location>
</feature>
<feature type="chain" id="PRO_0000286532" description="Plastid-lipid-associated protein 6, chloroplastic">
    <location>
        <begin position="73"/>
        <end position="284"/>
    </location>
</feature>
<feature type="region of interest" description="Disordered" evidence="2">
    <location>
        <begin position="1"/>
        <end position="47"/>
    </location>
</feature>
<feature type="compositionally biased region" description="Low complexity" evidence="2">
    <location>
        <begin position="1"/>
        <end position="11"/>
    </location>
</feature>
<feature type="modified residue" description="Phosphoserine" evidence="16">
    <location>
        <position position="96"/>
    </location>
</feature>
<feature type="modified residue" description="Phosphoserine" evidence="16 19">
    <location>
        <position position="105"/>
    </location>
</feature>
<feature type="modified residue" description="Phosphoserine" evidence="16">
    <location>
        <position position="148"/>
    </location>
</feature>
<feature type="modified residue" description="Phosphoserine" evidence="16">
    <location>
        <position position="151"/>
    </location>
</feature>
<feature type="modified residue" description="Phosphoserine" evidence="16">
    <location>
        <position position="155"/>
    </location>
</feature>
<feature type="sequence conflict" description="In Ref. 4; AAM64485." evidence="15" ref="4">
    <original>D</original>
    <variation>N</variation>
    <location>
        <position position="177"/>
    </location>
</feature>
<reference key="1">
    <citation type="submission" date="2003-09" db="EMBL/GenBank/DDBJ databases">
        <title>The Arabidopsis HrBP1 gene encodes a harpin-interacting factor that is a member of a PAP/fibrillin subfamily.</title>
        <authorList>
            <person name="Song X."/>
            <person name="Linderoth N.A."/>
            <person name="Bariola P.A."/>
            <person name="Bednarski D."/>
            <person name="Fan H."/>
            <person name="Wei Z."/>
        </authorList>
    </citation>
    <scope>NUCLEOTIDE SEQUENCE [MRNA]</scope>
</reference>
<reference key="2">
    <citation type="journal article" date="2000" name="DNA Res.">
        <title>Structural analysis of Arabidopsis thaliana chromosome 3. I. Sequence features of the regions of 4,504,864 bp covered by sixty P1 and TAC clones.</title>
        <authorList>
            <person name="Sato S."/>
            <person name="Nakamura Y."/>
            <person name="Kaneko T."/>
            <person name="Katoh T."/>
            <person name="Asamizu E."/>
            <person name="Tabata S."/>
        </authorList>
    </citation>
    <scope>NUCLEOTIDE SEQUENCE [LARGE SCALE GENOMIC DNA]</scope>
    <source>
        <strain>cv. Columbia</strain>
    </source>
</reference>
<reference key="3">
    <citation type="journal article" date="2017" name="Plant J.">
        <title>Araport11: a complete reannotation of the Arabidopsis thaliana reference genome.</title>
        <authorList>
            <person name="Cheng C.Y."/>
            <person name="Krishnakumar V."/>
            <person name="Chan A.P."/>
            <person name="Thibaud-Nissen F."/>
            <person name="Schobel S."/>
            <person name="Town C.D."/>
        </authorList>
    </citation>
    <scope>GENOME REANNOTATION</scope>
    <source>
        <strain>cv. Columbia</strain>
    </source>
</reference>
<reference key="4">
    <citation type="submission" date="2002-03" db="EMBL/GenBank/DDBJ databases">
        <title>Full-length cDNA from Arabidopsis thaliana.</title>
        <authorList>
            <person name="Brover V.V."/>
            <person name="Troukhan M.E."/>
            <person name="Alexandrov N.A."/>
            <person name="Lu Y.-P."/>
            <person name="Flavell R.B."/>
            <person name="Feldmann K.A."/>
        </authorList>
    </citation>
    <scope>NUCLEOTIDE SEQUENCE [LARGE SCALE MRNA]</scope>
</reference>
<reference key="5">
    <citation type="submission" date="2006-03" db="EMBL/GenBank/DDBJ databases">
        <title>Arabidopsis ORF clones.</title>
        <authorList>
            <person name="Shinn P."/>
            <person name="Chen H."/>
            <person name="Kim C.J."/>
            <person name="Ecker J.R."/>
        </authorList>
    </citation>
    <scope>NUCLEOTIDE SEQUENCE [LARGE SCALE MRNA]</scope>
    <source>
        <strain>cv. Columbia</strain>
    </source>
</reference>
<reference key="6">
    <citation type="journal article" date="2006" name="J. Biol. Chem.">
        <title>Tocopherol cyclase (VTE1) localization and vitamin E accumulation in chloroplast plastoglobule lipoprotein particles.</title>
        <authorList>
            <person name="Vidi P.-A."/>
            <person name="Kanwischer M."/>
            <person name="Baginsky S."/>
            <person name="Austin J.R."/>
            <person name="Csucs G."/>
            <person name="Doermann P."/>
            <person name="Kessler F."/>
            <person name="Brehelin C."/>
        </authorList>
    </citation>
    <scope>SUBCELLULAR LOCATION</scope>
    <source>
        <strain>cv. Col-2</strain>
    </source>
</reference>
<reference key="7">
    <citation type="journal article" date="2006" name="Plant Physiol.">
        <title>Protein profiling of plastoglobules in chloroplasts and chromoplasts. A surprising site for differential accumulation of metabolic enzymes.</title>
        <authorList>
            <person name="Ytterberg A.J."/>
            <person name="Peltier J.-B."/>
            <person name="van Wijk K.J."/>
        </authorList>
    </citation>
    <scope>IDENTIFICATION BY MASS SPECTROMETRY</scope>
    <scope>SUBCELLULAR LOCATION [LARGE SCALE ANALYSIS]</scope>
    <source>
        <strain>cv. Columbia</strain>
    </source>
</reference>
<reference key="8">
    <citation type="journal article" date="2006" name="Proteomics">
        <title>Analysis of the defence phosphoproteome of Arabidopsis thaliana using differential mass tagging.</title>
        <authorList>
            <person name="Jones A.M."/>
            <person name="Bennett M.H."/>
            <person name="Mansfield J.W."/>
            <person name="Grant M."/>
        </authorList>
    </citation>
    <scope>PHOSPHORYLATION</scope>
    <source>
        <strain>cv. Col-5</strain>
    </source>
</reference>
<reference key="9">
    <citation type="journal article" date="2008" name="J. Am. Soc. Mass Spectrom.">
        <title>Structure and dynamics of photosystem II light-harvesting complex revealed by high-resolution FTICR mass spectrometric proteome analysis.</title>
        <authorList>
            <person name="Galetskiy D."/>
            <person name="Susnea I."/>
            <person name="Reiser V."/>
            <person name="Adamska I."/>
            <person name="Przybylski M."/>
        </authorList>
    </citation>
    <scope>IDENTIFICATION IN THE LHCII COMPLEX</scope>
    <scope>IDENTIFICATION BY MASS SPECTROMETRY</scope>
</reference>
<reference key="10">
    <citation type="journal article" date="2009" name="Plant Physiol.">
        <title>Large-scale Arabidopsis phosphoproteome profiling reveals novel chloroplast kinase substrates and phosphorylation networks.</title>
        <authorList>
            <person name="Reiland S."/>
            <person name="Messerli G."/>
            <person name="Baerenfaller K."/>
            <person name="Gerrits B."/>
            <person name="Endler A."/>
            <person name="Grossmann J."/>
            <person name="Gruissem W."/>
            <person name="Baginsky S."/>
        </authorList>
    </citation>
    <scope>PHOSPHORYLATION [LARGE SCALE ANALYSIS] AT SER-105</scope>
    <scope>IDENTIFICATION BY MASS SPECTROMETRY [LARGE SCALE ANALYSIS]</scope>
</reference>
<reference key="11">
    <citation type="journal article" date="2010" name="Plant Physiol.">
        <title>FIBRILLIN4 is required for plastoglobule development and stress resistance in apple and Arabidopsis.</title>
        <authorList>
            <person name="Singh D.K."/>
            <person name="Maximova S.N."/>
            <person name="Jensen P.J."/>
            <person name="Lehman B.L."/>
            <person name="Ngugi H.K."/>
            <person name="McNellis T.W."/>
        </authorList>
    </citation>
    <scope>FUNCTION</scope>
    <scope>DISRUPTION PHENOTYPE</scope>
</reference>
<reference key="12">
    <citation type="journal article" date="2011" name="Trends Plant Sci.">
        <title>Fibrillin protein function: the tip of the iceberg?</title>
        <authorList>
            <person name="Singh D.K."/>
            <person name="McNellis T.W."/>
        </authorList>
    </citation>
    <scope>GENE FAMILY</scope>
    <scope>NOMENCLATURE</scope>
</reference>
<reference key="13">
    <citation type="journal article" date="2012" name="Plant Physiol.">
        <title>The functional network of the Arabidopsis plastoglobule proteome based on quantitative proteomics and genome-wide coexpression analysis.</title>
        <authorList>
            <person name="Lundquist P.K."/>
            <person name="Poliakov A."/>
            <person name="Bhuiyan N.H."/>
            <person name="Zybailov B."/>
            <person name="Sun Q."/>
            <person name="van Wijk K.J."/>
        </authorList>
    </citation>
    <scope>IDENTIFICATION BY MASS SPECTROMETRY</scope>
    <scope>SUBCELLULAR LOCATION [LARGE SCALE ANALYSIS]</scope>
    <source>
        <strain>cv. Columbia</strain>
    </source>
</reference>
<reference key="14">
    <citation type="journal article" date="2016" name="J. Exp. Bot.">
        <title>Phosphorylation of plastoglobular proteins in Arabidopsis thaliana.</title>
        <authorList>
            <person name="Lohscheider J.N."/>
            <person name="Friso G."/>
            <person name="van Wijk K.J."/>
        </authorList>
    </citation>
    <scope>3D-STRUCTURE MODELING</scope>
    <scope>PHOSPHORYLATION AT SER-96; SER-105; SER-148; SER-151 AND SER-155</scope>
</reference>
<gene>
    <name evidence="11" type="primary">PAP6</name>
    <name evidence="13" type="synonym">FBN4</name>
    <name evidence="10" type="synonym">FIB4</name>
    <name evidence="14" type="synonym">HRBP1</name>
    <name evidence="9" type="synonym">PGL30.4</name>
    <name evidence="17" type="ordered locus">At3g23400</name>
    <name evidence="18" type="ORF">MLM24.13</name>
</gene>
<protein>
    <recommendedName>
        <fullName evidence="11">Plastid-lipid-associated protein 6, chloroplastic</fullName>
    </recommendedName>
    <alternativeName>
        <fullName evidence="10">Fibrillin-4</fullName>
    </alternativeName>
    <alternativeName>
        <fullName evidence="12">Fibrillin-6</fullName>
    </alternativeName>
    <alternativeName>
        <fullName evidence="14">Harpin-binding protein 1</fullName>
        <shortName evidence="14">HrBP1</shortName>
    </alternativeName>
    <alternativeName>
        <fullName evidence="9">Plastoglobulin 30.4</fullName>
        <shortName evidence="9">AtPGL30.4</shortName>
    </alternativeName>
</protein>
<name>PAP6_ARATH</name>
<dbReference type="EMBL" id="AY383618">
    <property type="protein sequence ID" value="AAR26476.1"/>
    <property type="molecule type" value="mRNA"/>
</dbReference>
<dbReference type="EMBL" id="AB015474">
    <property type="protein sequence ID" value="BAB02284.1"/>
    <property type="molecule type" value="Genomic_DNA"/>
</dbReference>
<dbReference type="EMBL" id="CP002686">
    <property type="protein sequence ID" value="AEE76761.1"/>
    <property type="molecule type" value="Genomic_DNA"/>
</dbReference>
<dbReference type="EMBL" id="AY086921">
    <property type="protein sequence ID" value="AAM64485.1"/>
    <property type="molecule type" value="mRNA"/>
</dbReference>
<dbReference type="EMBL" id="BT024911">
    <property type="protein sequence ID" value="ABD91502.1"/>
    <property type="molecule type" value="mRNA"/>
</dbReference>
<dbReference type="RefSeq" id="NP_566728.1">
    <property type="nucleotide sequence ID" value="NM_113243.4"/>
</dbReference>
<dbReference type="SMR" id="Q9LW57"/>
<dbReference type="BioGRID" id="7253">
    <property type="interactions" value="3"/>
</dbReference>
<dbReference type="FunCoup" id="Q9LW57">
    <property type="interactions" value="1405"/>
</dbReference>
<dbReference type="IntAct" id="Q9LW57">
    <property type="interactions" value="1"/>
</dbReference>
<dbReference type="STRING" id="3702.Q9LW57"/>
<dbReference type="iPTMnet" id="Q9LW57"/>
<dbReference type="PaxDb" id="3702-AT3G23400.1"/>
<dbReference type="ProteomicsDB" id="236322"/>
<dbReference type="EnsemblPlants" id="AT3G23400.1">
    <property type="protein sequence ID" value="AT3G23400.1"/>
    <property type="gene ID" value="AT3G23400"/>
</dbReference>
<dbReference type="GeneID" id="821921"/>
<dbReference type="Gramene" id="AT3G23400.1">
    <property type="protein sequence ID" value="AT3G23400.1"/>
    <property type="gene ID" value="AT3G23400"/>
</dbReference>
<dbReference type="KEGG" id="ath:AT3G23400"/>
<dbReference type="Araport" id="AT3G23400"/>
<dbReference type="TAIR" id="AT3G23400">
    <property type="gene designation" value="FIB4"/>
</dbReference>
<dbReference type="eggNOG" id="ENOG502QVEU">
    <property type="taxonomic scope" value="Eukaryota"/>
</dbReference>
<dbReference type="HOGENOM" id="CLU_069245_3_0_1"/>
<dbReference type="InParanoid" id="Q9LW57"/>
<dbReference type="OMA" id="IGAPWPF"/>
<dbReference type="OrthoDB" id="203682at2759"/>
<dbReference type="PhylomeDB" id="Q9LW57"/>
<dbReference type="CD-CODE" id="4299E36E">
    <property type="entry name" value="Nucleolus"/>
</dbReference>
<dbReference type="PRO" id="PR:Q9LW57"/>
<dbReference type="Proteomes" id="UP000006548">
    <property type="component" value="Chromosome 3"/>
</dbReference>
<dbReference type="ExpressionAtlas" id="Q9LW57">
    <property type="expression patterns" value="baseline and differential"/>
</dbReference>
<dbReference type="GO" id="GO:0009507">
    <property type="term" value="C:chloroplast"/>
    <property type="evidence" value="ECO:0007005"/>
    <property type="project" value="TAIR"/>
</dbReference>
<dbReference type="GO" id="GO:0009941">
    <property type="term" value="C:chloroplast envelope"/>
    <property type="evidence" value="ECO:0007005"/>
    <property type="project" value="TAIR"/>
</dbReference>
<dbReference type="GO" id="GO:0009534">
    <property type="term" value="C:chloroplast thylakoid"/>
    <property type="evidence" value="ECO:0007005"/>
    <property type="project" value="TAIR"/>
</dbReference>
<dbReference type="GO" id="GO:0009535">
    <property type="term" value="C:chloroplast thylakoid membrane"/>
    <property type="evidence" value="ECO:0007005"/>
    <property type="project" value="TAIR"/>
</dbReference>
<dbReference type="GO" id="GO:0005829">
    <property type="term" value="C:cytosol"/>
    <property type="evidence" value="ECO:0007005"/>
    <property type="project" value="TAIR"/>
</dbReference>
<dbReference type="GO" id="GO:0005634">
    <property type="term" value="C:nucleus"/>
    <property type="evidence" value="ECO:0007005"/>
    <property type="project" value="TAIR"/>
</dbReference>
<dbReference type="GO" id="GO:0005886">
    <property type="term" value="C:plasma membrane"/>
    <property type="evidence" value="ECO:0007005"/>
    <property type="project" value="TAIR"/>
</dbReference>
<dbReference type="GO" id="GO:0010287">
    <property type="term" value="C:plastoglobule"/>
    <property type="evidence" value="ECO:0007005"/>
    <property type="project" value="TAIR"/>
</dbReference>
<dbReference type="GO" id="GO:0009579">
    <property type="term" value="C:thylakoid"/>
    <property type="evidence" value="ECO:0007005"/>
    <property type="project" value="TAIR"/>
</dbReference>
<dbReference type="GO" id="GO:0031977">
    <property type="term" value="C:thylakoid lumen"/>
    <property type="evidence" value="ECO:0007005"/>
    <property type="project" value="TAIR"/>
</dbReference>
<dbReference type="GO" id="GO:0009658">
    <property type="term" value="P:chloroplast organization"/>
    <property type="evidence" value="ECO:0000315"/>
    <property type="project" value="TAIR"/>
</dbReference>
<dbReference type="GO" id="GO:0042742">
    <property type="term" value="P:defense response to bacterium"/>
    <property type="evidence" value="ECO:0000315"/>
    <property type="project" value="TAIR"/>
</dbReference>
<dbReference type="GO" id="GO:0010193">
    <property type="term" value="P:response to ozone"/>
    <property type="evidence" value="ECO:0000315"/>
    <property type="project" value="TAIR"/>
</dbReference>
<dbReference type="InterPro" id="IPR039633">
    <property type="entry name" value="PAP"/>
</dbReference>
<dbReference type="InterPro" id="IPR006843">
    <property type="entry name" value="PAP/fibrillin_dom"/>
</dbReference>
<dbReference type="PANTHER" id="PTHR31906">
    <property type="entry name" value="PLASTID-LIPID-ASSOCIATED PROTEIN 4, CHLOROPLASTIC-RELATED"/>
    <property type="match status" value="1"/>
</dbReference>
<dbReference type="Pfam" id="PF04755">
    <property type="entry name" value="PAP_fibrillin"/>
    <property type="match status" value="1"/>
</dbReference>
<dbReference type="PROSITE" id="PS00213">
    <property type="entry name" value="LIPOCALIN"/>
    <property type="match status" value="1"/>
</dbReference>
<sequence>MATSSTFSSLLPSPPALLSDHRSPPPSIRYSFSPLTTPKSSRLGFTVPEKRNLAANSSLVEVSIGGESDPPPSSSGSGGDDKQIALLKLKLLSVVSGLNRGLVASVDDLERAEVAAKELETAGGPVDLTDDLDKLQGKWRLLYSSAFSSRSLGGSRPGLPTGRLIPVTLGQVFQRIDVFSKDFDNIAEVELGAPWPFPPLEATATLAHKFELLGTCKIKITFEKTTVKTSGNLSQIPPFDIPRLPDSFRPSSNPGTGDFEVTYVDDTMRITRGDRGELRVFVIA</sequence>
<evidence type="ECO:0000255" key="1"/>
<evidence type="ECO:0000256" key="2">
    <source>
        <dbReference type="SAM" id="MobiDB-lite"/>
    </source>
</evidence>
<evidence type="ECO:0000269" key="3">
    <source>
    </source>
</evidence>
<evidence type="ECO:0000269" key="4">
    <source>
    </source>
</evidence>
<evidence type="ECO:0000269" key="5">
    <source>
    </source>
</evidence>
<evidence type="ECO:0000269" key="6">
    <source>
    </source>
</evidence>
<evidence type="ECO:0000269" key="7">
    <source>
    </source>
</evidence>
<evidence type="ECO:0000269" key="8">
    <source>
    </source>
</evidence>
<evidence type="ECO:0000303" key="9">
    <source>
    </source>
</evidence>
<evidence type="ECO:0000303" key="10">
    <source>
    </source>
</evidence>
<evidence type="ECO:0000303" key="11">
    <source>
    </source>
</evidence>
<evidence type="ECO:0000303" key="12">
    <source>
    </source>
</evidence>
<evidence type="ECO:0000303" key="13">
    <source>
    </source>
</evidence>
<evidence type="ECO:0000303" key="14">
    <source ref="1"/>
</evidence>
<evidence type="ECO:0000305" key="15"/>
<evidence type="ECO:0000305" key="16">
    <source>
    </source>
</evidence>
<evidence type="ECO:0000312" key="17">
    <source>
        <dbReference type="Araport" id="AT3G23400"/>
    </source>
</evidence>
<evidence type="ECO:0000312" key="18">
    <source>
        <dbReference type="EMBL" id="BAB02284.1"/>
    </source>
</evidence>
<evidence type="ECO:0007744" key="19">
    <source>
    </source>
</evidence>
<accession>Q9LW57</accession>
<accession>Q8LBY7</accession>